<comment type="function">
    <text evidence="1">One of the primary rRNA binding proteins, it binds directly to 16S rRNA where it nucleates assembly of the body of the 30S subunit.</text>
</comment>
<comment type="function">
    <text evidence="1">With S5 and S12 plays an important role in translational accuracy.</text>
</comment>
<comment type="subunit">
    <text evidence="1">Part of the 30S ribosomal subunit. Contacts protein S5. The interaction surface between S4 and S5 is involved in control of translational fidelity.</text>
</comment>
<comment type="similarity">
    <text evidence="1">Belongs to the universal ribosomal protein uS4 family.</text>
</comment>
<feature type="chain" id="PRO_1000140700" description="Small ribosomal subunit protein uS4">
    <location>
        <begin position="1"/>
        <end position="207"/>
    </location>
</feature>
<feature type="domain" description="S4 RNA-binding" evidence="1">
    <location>
        <begin position="97"/>
        <end position="160"/>
    </location>
</feature>
<feature type="region of interest" description="Disordered" evidence="2">
    <location>
        <begin position="31"/>
        <end position="55"/>
    </location>
</feature>
<feature type="compositionally biased region" description="Polar residues" evidence="2">
    <location>
        <begin position="42"/>
        <end position="53"/>
    </location>
</feature>
<accession>B2JI40</accession>
<reference key="1">
    <citation type="journal article" date="2014" name="Stand. Genomic Sci.">
        <title>Complete genome sequence of Burkholderia phymatum STM815(T), a broad host range and efficient nitrogen-fixing symbiont of Mimosa species.</title>
        <authorList>
            <person name="Moulin L."/>
            <person name="Klonowska A."/>
            <person name="Caroline B."/>
            <person name="Booth K."/>
            <person name="Vriezen J.A."/>
            <person name="Melkonian R."/>
            <person name="James E.K."/>
            <person name="Young J.P."/>
            <person name="Bena G."/>
            <person name="Hauser L."/>
            <person name="Land M."/>
            <person name="Kyrpides N."/>
            <person name="Bruce D."/>
            <person name="Chain P."/>
            <person name="Copeland A."/>
            <person name="Pitluck S."/>
            <person name="Woyke T."/>
            <person name="Lizotte-Waniewski M."/>
            <person name="Bristow J."/>
            <person name="Riley M."/>
        </authorList>
    </citation>
    <scope>NUCLEOTIDE SEQUENCE [LARGE SCALE GENOMIC DNA]</scope>
    <source>
        <strain>DSM 17167 / CIP 108236 / LMG 21445 / STM815</strain>
    </source>
</reference>
<evidence type="ECO:0000255" key="1">
    <source>
        <dbReference type="HAMAP-Rule" id="MF_01306"/>
    </source>
</evidence>
<evidence type="ECO:0000256" key="2">
    <source>
        <dbReference type="SAM" id="MobiDB-lite"/>
    </source>
</evidence>
<evidence type="ECO:0000305" key="3"/>
<protein>
    <recommendedName>
        <fullName evidence="1">Small ribosomal subunit protein uS4</fullName>
    </recommendedName>
    <alternativeName>
        <fullName evidence="3">30S ribosomal protein S4</fullName>
    </alternativeName>
</protein>
<sequence length="207" mass="23183">MARYIGPKAKLSRREGTDLFLKSARRSLADKCKLDSKPGQHGRTSGARTSDYGTQLREKQKVKRIYGVLERQFRRYFAEADRRKGNTGENLLKLLESRLDNVVYRMGFGSTRAEARQLVSHKAITVNGVVANIPSLQVKAGDVIAVREQAKKQARILEALSLAEQGGLPQWVAVDSKKFEGTFKSMPERSDIAGDINESLIVELYSR</sequence>
<proteinExistence type="inferred from homology"/>
<gene>
    <name evidence="1" type="primary">rpsD</name>
    <name type="ordered locus">Bphy_2814</name>
</gene>
<organism>
    <name type="scientific">Paraburkholderia phymatum (strain DSM 17167 / CIP 108236 / LMG 21445 / STM815)</name>
    <name type="common">Burkholderia phymatum</name>
    <dbReference type="NCBI Taxonomy" id="391038"/>
    <lineage>
        <taxon>Bacteria</taxon>
        <taxon>Pseudomonadati</taxon>
        <taxon>Pseudomonadota</taxon>
        <taxon>Betaproteobacteria</taxon>
        <taxon>Burkholderiales</taxon>
        <taxon>Burkholderiaceae</taxon>
        <taxon>Paraburkholderia</taxon>
    </lineage>
</organism>
<keyword id="KW-1185">Reference proteome</keyword>
<keyword id="KW-0687">Ribonucleoprotein</keyword>
<keyword id="KW-0689">Ribosomal protein</keyword>
<keyword id="KW-0694">RNA-binding</keyword>
<keyword id="KW-0699">rRNA-binding</keyword>
<name>RS4_PARP8</name>
<dbReference type="EMBL" id="CP001043">
    <property type="protein sequence ID" value="ACC71986.1"/>
    <property type="molecule type" value="Genomic_DNA"/>
</dbReference>
<dbReference type="RefSeq" id="WP_012402181.1">
    <property type="nucleotide sequence ID" value="NC_010622.1"/>
</dbReference>
<dbReference type="SMR" id="B2JI40"/>
<dbReference type="STRING" id="391038.Bphy_2814"/>
<dbReference type="KEGG" id="bph:Bphy_2814"/>
<dbReference type="eggNOG" id="COG0522">
    <property type="taxonomic scope" value="Bacteria"/>
</dbReference>
<dbReference type="HOGENOM" id="CLU_092403_0_2_4"/>
<dbReference type="OrthoDB" id="9803672at2"/>
<dbReference type="Proteomes" id="UP000001192">
    <property type="component" value="Chromosome 1"/>
</dbReference>
<dbReference type="GO" id="GO:0015935">
    <property type="term" value="C:small ribosomal subunit"/>
    <property type="evidence" value="ECO:0007669"/>
    <property type="project" value="InterPro"/>
</dbReference>
<dbReference type="GO" id="GO:0019843">
    <property type="term" value="F:rRNA binding"/>
    <property type="evidence" value="ECO:0007669"/>
    <property type="project" value="UniProtKB-UniRule"/>
</dbReference>
<dbReference type="GO" id="GO:0003735">
    <property type="term" value="F:structural constituent of ribosome"/>
    <property type="evidence" value="ECO:0007669"/>
    <property type="project" value="InterPro"/>
</dbReference>
<dbReference type="GO" id="GO:0042274">
    <property type="term" value="P:ribosomal small subunit biogenesis"/>
    <property type="evidence" value="ECO:0007669"/>
    <property type="project" value="TreeGrafter"/>
</dbReference>
<dbReference type="GO" id="GO:0006412">
    <property type="term" value="P:translation"/>
    <property type="evidence" value="ECO:0007669"/>
    <property type="project" value="UniProtKB-UniRule"/>
</dbReference>
<dbReference type="CDD" id="cd00165">
    <property type="entry name" value="S4"/>
    <property type="match status" value="1"/>
</dbReference>
<dbReference type="FunFam" id="1.10.1050.10:FF:000001">
    <property type="entry name" value="30S ribosomal protein S4"/>
    <property type="match status" value="1"/>
</dbReference>
<dbReference type="FunFam" id="3.10.290.10:FF:000001">
    <property type="entry name" value="30S ribosomal protein S4"/>
    <property type="match status" value="1"/>
</dbReference>
<dbReference type="Gene3D" id="1.10.1050.10">
    <property type="entry name" value="Ribosomal Protein S4 Delta 41, Chain A, domain 1"/>
    <property type="match status" value="1"/>
</dbReference>
<dbReference type="Gene3D" id="3.10.290.10">
    <property type="entry name" value="RNA-binding S4 domain"/>
    <property type="match status" value="1"/>
</dbReference>
<dbReference type="HAMAP" id="MF_01306_B">
    <property type="entry name" value="Ribosomal_uS4_B"/>
    <property type="match status" value="1"/>
</dbReference>
<dbReference type="InterPro" id="IPR022801">
    <property type="entry name" value="Ribosomal_uS4"/>
</dbReference>
<dbReference type="InterPro" id="IPR005709">
    <property type="entry name" value="Ribosomal_uS4_bac-type"/>
</dbReference>
<dbReference type="InterPro" id="IPR018079">
    <property type="entry name" value="Ribosomal_uS4_CS"/>
</dbReference>
<dbReference type="InterPro" id="IPR001912">
    <property type="entry name" value="Ribosomal_uS4_N"/>
</dbReference>
<dbReference type="InterPro" id="IPR002942">
    <property type="entry name" value="S4_RNA-bd"/>
</dbReference>
<dbReference type="InterPro" id="IPR036986">
    <property type="entry name" value="S4_RNA-bd_sf"/>
</dbReference>
<dbReference type="NCBIfam" id="NF003717">
    <property type="entry name" value="PRK05327.1"/>
    <property type="match status" value="1"/>
</dbReference>
<dbReference type="NCBIfam" id="TIGR01017">
    <property type="entry name" value="rpsD_bact"/>
    <property type="match status" value="1"/>
</dbReference>
<dbReference type="PANTHER" id="PTHR11831">
    <property type="entry name" value="30S 40S RIBOSOMAL PROTEIN"/>
    <property type="match status" value="1"/>
</dbReference>
<dbReference type="PANTHER" id="PTHR11831:SF4">
    <property type="entry name" value="SMALL RIBOSOMAL SUBUNIT PROTEIN US4M"/>
    <property type="match status" value="1"/>
</dbReference>
<dbReference type="Pfam" id="PF00163">
    <property type="entry name" value="Ribosomal_S4"/>
    <property type="match status" value="1"/>
</dbReference>
<dbReference type="Pfam" id="PF01479">
    <property type="entry name" value="S4"/>
    <property type="match status" value="1"/>
</dbReference>
<dbReference type="SMART" id="SM01390">
    <property type="entry name" value="Ribosomal_S4"/>
    <property type="match status" value="1"/>
</dbReference>
<dbReference type="SMART" id="SM00363">
    <property type="entry name" value="S4"/>
    <property type="match status" value="1"/>
</dbReference>
<dbReference type="SUPFAM" id="SSF55174">
    <property type="entry name" value="Alpha-L RNA-binding motif"/>
    <property type="match status" value="1"/>
</dbReference>
<dbReference type="PROSITE" id="PS00632">
    <property type="entry name" value="RIBOSOMAL_S4"/>
    <property type="match status" value="1"/>
</dbReference>
<dbReference type="PROSITE" id="PS50889">
    <property type="entry name" value="S4"/>
    <property type="match status" value="1"/>
</dbReference>